<feature type="chain" id="PRO_0000449859" description="NAD-dependent epimerase/dehydratase ALT6">
    <location>
        <begin position="1"/>
        <end position="354"/>
    </location>
</feature>
<feature type="binding site" evidence="1">
    <location>
        <position position="41"/>
    </location>
    <ligand>
        <name>NADP(+)</name>
        <dbReference type="ChEBI" id="CHEBI:58349"/>
    </ligand>
</feature>
<feature type="binding site" evidence="1">
    <location>
        <position position="174"/>
    </location>
    <ligand>
        <name>NADP(+)</name>
        <dbReference type="ChEBI" id="CHEBI:58349"/>
    </ligand>
</feature>
<keyword id="KW-0560">Oxidoreductase</keyword>
<name>ALT6_ALTAL</name>
<evidence type="ECO:0000250" key="1">
    <source>
        <dbReference type="UniProtKB" id="A0A059TC02"/>
    </source>
</evidence>
<evidence type="ECO:0000250" key="2">
    <source>
        <dbReference type="UniProtKB" id="W7LL82"/>
    </source>
</evidence>
<evidence type="ECO:0000269" key="3">
    <source>
    </source>
</evidence>
<evidence type="ECO:0000269" key="4">
    <source>
    </source>
</evidence>
<evidence type="ECO:0000269" key="5">
    <source>
    </source>
</evidence>
<evidence type="ECO:0000269" key="6">
    <source ref="5"/>
</evidence>
<evidence type="ECO:0000303" key="7">
    <source ref="1"/>
</evidence>
<evidence type="ECO:0000305" key="8"/>
<evidence type="ECO:0000305" key="9">
    <source>
    </source>
</evidence>
<protein>
    <recommendedName>
        <fullName evidence="2">NAD-dependent epimerase/dehydratase ALT6</fullName>
        <ecNumber evidence="2">1.1.1.-</ecNumber>
    </recommendedName>
    <alternativeName>
        <fullName evidence="7">AAL-toxin biosynthesis cluster protein 6</fullName>
    </alternativeName>
</protein>
<sequence>MDNERRLVLLTGATGHVGFAVLVEALEAEYNVRVVLREISKADSILSSEPVKNALSSTAAPELSFVEVPDMTVPGAFDSAMQSVTYVVHCASPINRGKFRDFQTELIDPAVKGTTNILKAAHATPSVLRVVITSSNSAIVNHNILPAPGTCVSPSDRQPDYPLDVAMHDADEAYSAAKTSALNATDTFVSSANDLRFDVVSIMPTFVFGPKELAKSPGDIIDGSNVFGIGLVLIKQSWGSLRIEAVSCHIDDVAQAHVQALNHDEDVQFPFKAGTHRSCLLASSFRPDEVRDIVEREFPKESWQGEEAVFRGKGSYAWYHTDYDVSAAEKLLGRKLKGIVEQIRSSGLQVLRIA</sequence>
<organism>
    <name type="scientific">Alternaria alternata</name>
    <name type="common">Alternaria rot fungus</name>
    <name type="synonym">Torula alternata</name>
    <dbReference type="NCBI Taxonomy" id="5599"/>
    <lineage>
        <taxon>Eukaryota</taxon>
        <taxon>Fungi</taxon>
        <taxon>Dikarya</taxon>
        <taxon>Ascomycota</taxon>
        <taxon>Pezizomycotina</taxon>
        <taxon>Dothideomycetes</taxon>
        <taxon>Pleosporomycetidae</taxon>
        <taxon>Pleosporales</taxon>
        <taxon>Pleosporineae</taxon>
        <taxon>Pleosporaceae</taxon>
        <taxon>Alternaria</taxon>
        <taxon>Alternaria sect. Alternaria</taxon>
        <taxon>Alternaria alternata complex</taxon>
    </lineage>
</organism>
<comment type="function">
    <text evidence="3 4 5 6 9">NAD-dependent epimerase/dehydratase; part of the gene cluster that mediates the biosynthesis of the host-selective toxins (HSTs) AAL-toxins, sphinganine-analog mycotoxins responsible for Alternaria stem canker on tomato by the tomato pathotype (PubMed:18435561, PubMed:19449880, PubMed:19749175). The biosynthesis starts with the polyketide synthase ALT1-catalyzed C-16 carbon chain assembly from one starter acetyl-CoA unit with malonyl-CoA extender units (PubMed:18435561, PubMed:19449880). ALT1 also selectively transfers methyl groups at the first and the third cycle of chain elongation for AAL toxin (PubMed:19449880). The C-16 polyketide chain is released from the enzyme by a nucleophilic attack of a carbanion, which is derived from R-carbon of glycin by decarboxylation, on the carbonyl carbon of polyketide acyl chain (Probable). This step is probably catalyzed by a pyridoxal 5'-phosphate-dependent aminoacyl transferase ALT4 (Probable). The respective functions of the other enzymes encoded by the cluster have still to be elucidated (Probable). The sphingosine N-acyltransferase-like protein ALT7 seems not to act as a resistance/self-tolerance factor against the toxin in the toxin biosynthetic gene cluster, contrary to what is expected (Ref.5).</text>
</comment>
<comment type="pathway">
    <text evidence="2">Mycotoxin biosynthesis.</text>
</comment>
<comment type="miscellaneous">
    <text evidence="5">Gene clusters encoding host-selective toxins (HSTs) are localized on conditionally dispensable chromosomes (CDCs), also called supernumerary chromosomes, where they are present in multiple copies. The CDCs are not essential for saprophytic growth but controls host-selective pathogenicity.</text>
</comment>
<comment type="similarity">
    <text evidence="8">Belongs to the NAD(P)-dependent epimerase/dehydratase family. Dihydroflavonol-4-reductase subfamily.</text>
</comment>
<dbReference type="EC" id="1.1.1.-" evidence="2"/>
<dbReference type="EMBL" id="AB969680">
    <property type="protein sequence ID" value="BBG74268.1"/>
    <property type="molecule type" value="Genomic_DNA"/>
</dbReference>
<dbReference type="SMR" id="A0A3G9HN61"/>
<dbReference type="VEuPathDB" id="FungiDB:CC77DRAFT_1068311"/>
<dbReference type="GO" id="GO:0016616">
    <property type="term" value="F:oxidoreductase activity, acting on the CH-OH group of donors, NAD or NADP as acceptor"/>
    <property type="evidence" value="ECO:0007669"/>
    <property type="project" value="TreeGrafter"/>
</dbReference>
<dbReference type="Gene3D" id="3.40.50.720">
    <property type="entry name" value="NAD(P)-binding Rossmann-like Domain"/>
    <property type="match status" value="1"/>
</dbReference>
<dbReference type="InterPro" id="IPR001509">
    <property type="entry name" value="Epimerase_deHydtase"/>
</dbReference>
<dbReference type="InterPro" id="IPR036291">
    <property type="entry name" value="NAD(P)-bd_dom_sf"/>
</dbReference>
<dbReference type="InterPro" id="IPR050425">
    <property type="entry name" value="NAD(P)_dehydrat-like"/>
</dbReference>
<dbReference type="PANTHER" id="PTHR10366">
    <property type="entry name" value="NAD DEPENDENT EPIMERASE/DEHYDRATASE"/>
    <property type="match status" value="1"/>
</dbReference>
<dbReference type="PANTHER" id="PTHR10366:SF564">
    <property type="entry name" value="STEROL-4-ALPHA-CARBOXYLATE 3-DEHYDROGENASE, DECARBOXYLATING"/>
    <property type="match status" value="1"/>
</dbReference>
<dbReference type="Pfam" id="PF01370">
    <property type="entry name" value="Epimerase"/>
    <property type="match status" value="1"/>
</dbReference>
<dbReference type="SUPFAM" id="SSF51735">
    <property type="entry name" value="NAD(P)-binding Rossmann-fold domains"/>
    <property type="match status" value="1"/>
</dbReference>
<gene>
    <name evidence="7" type="primary">ALT6</name>
</gene>
<accession>A0A3G9HN61</accession>
<reference key="1">
    <citation type="submission" date="2014-06" db="EMBL/GenBank/DDBJ databases">
        <title>AAL-toxin biosynthetic genes cluster in the tomato pathotype of Alternaria alternata.</title>
        <authorList>
            <person name="Akagi Y."/>
            <person name="Akamatsu H."/>
            <person name="Takao K."/>
            <person name="Tsuge T."/>
            <person name="Kodama M."/>
        </authorList>
    </citation>
    <scope>NUCLEOTIDE SEQUENCE [GENOMIC DNA]</scope>
    <source>
        <strain>As-27</strain>
    </source>
</reference>
<reference key="2">
    <citation type="journal article" date="2008" name="J. Nat. Prod.">
        <title>Functional complementation of fumonisin biosynthesis in FUM1-disrupted fusarium verticillioides by the AAL-toxin polyketide synthase gene ALT1 from Alternaria alternata f. sp. Lycopersici.</title>
        <authorList>
            <person name="Zhu X."/>
            <person name="Vogeler C."/>
            <person name="Du L."/>
        </authorList>
    </citation>
    <scope>FUNCTION</scope>
</reference>
<reference key="3">
    <citation type="journal article" date="2009" name="Eukaryot. Cell">
        <title>Horizontal chromosome transfer, a mechanism for the evolution and differentiation of a plant-pathogenic fungus.</title>
        <authorList>
            <person name="Akagi Y."/>
            <person name="Akamatsu H."/>
            <person name="Otani H."/>
            <person name="Kodama M."/>
        </authorList>
    </citation>
    <scope>FUNCTION</scope>
</reference>
<reference key="4">
    <citation type="journal article" date="2009" name="J. Nat. Prod.">
        <title>Introduction of the AAL-toxin polyketide synthase gene ALT1 into FUM1-disrupted Fusarium verticillioides produces metabolites with the fumonisin methylation pattern.</title>
        <authorList>
            <person name="Li Y."/>
            <person name="Shen Y."/>
            <person name="Zhu X."/>
            <person name="Du L."/>
        </authorList>
    </citation>
    <scope>FUNCTION</scope>
</reference>
<reference key="5">
    <citation type="journal article" date="2012" name="J. Plant Pathol. Microbiol.">
        <title>Functional analysis of the ceramide synthase gene ALT7, a homolog of the disease resistance gene Asc1, in the plant pathogen Alternaria alternata.</title>
        <authorList>
            <person name="Kheder A.A."/>
            <person name="Akagi Y."/>
            <person name="Tsuge T."/>
            <person name="Kodama M."/>
        </authorList>
    </citation>
    <scope>FUNCTION</scope>
</reference>
<proteinExistence type="inferred from homology"/>